<keyword id="KW-1185">Reference proteome</keyword>
<keyword id="KW-0687">Ribonucleoprotein</keyword>
<keyword id="KW-0689">Ribosomal protein</keyword>
<keyword id="KW-0694">RNA-binding</keyword>
<keyword id="KW-0699">rRNA-binding</keyword>
<evidence type="ECO:0000250" key="1"/>
<evidence type="ECO:0000255" key="2">
    <source>
        <dbReference type="HAMAP-Rule" id="MF_01325"/>
    </source>
</evidence>
<evidence type="ECO:0000256" key="3">
    <source>
        <dbReference type="SAM" id="MobiDB-lite"/>
    </source>
</evidence>
<evidence type="ECO:0000305" key="4"/>
<proteinExistence type="inferred from homology"/>
<comment type="function">
    <text evidence="2">One of the primary rRNA binding proteins, it binds directly near the 3'-end of the 23S rRNA, where it nucleates assembly of the 50S subunit.</text>
</comment>
<comment type="subunit">
    <text evidence="2">Part of the 50S ribosomal subunit. Forms a cluster with proteins L14 and L24e.</text>
</comment>
<comment type="similarity">
    <text evidence="2">Belongs to the universal ribosomal protein uL3 family.</text>
</comment>
<name>RL3_HALSA</name>
<feature type="initiator methionine" description="Removed" evidence="1">
    <location>
        <position position="1"/>
    </location>
</feature>
<feature type="chain" id="PRO_0000077208" description="Large ribosomal subunit protein uL3">
    <location>
        <begin position="2"/>
        <end position="335"/>
    </location>
</feature>
<feature type="region of interest" description="Disordered" evidence="3">
    <location>
        <begin position="1"/>
        <end position="35"/>
    </location>
</feature>
<feature type="region of interest" description="Disordered" evidence="3">
    <location>
        <begin position="234"/>
        <end position="256"/>
    </location>
</feature>
<feature type="region of interest" description="Disordered" evidence="3">
    <location>
        <begin position="312"/>
        <end position="335"/>
    </location>
</feature>
<feature type="compositionally biased region" description="Polar residues" evidence="3">
    <location>
        <begin position="244"/>
        <end position="256"/>
    </location>
</feature>
<feature type="sequence conflict" description="In Ref. 1; BAA22270." evidence="4" ref="1">
    <original>G</original>
    <variation>A</variation>
    <location>
        <position position="41"/>
    </location>
</feature>
<feature type="sequence conflict" description="In Ref. 1; BAA22270." evidence="4" ref="1">
    <location>
        <position position="75"/>
    </location>
</feature>
<feature type="sequence conflict" description="In Ref. 1; BAA22270." evidence="4" ref="1">
    <location>
        <begin position="82"/>
        <end position="83"/>
    </location>
</feature>
<feature type="sequence conflict" description="In Ref. 1; BAA22270." evidence="4" ref="1">
    <original>DEGGD</original>
    <variation>TRRV</variation>
    <location>
        <begin position="118"/>
        <end position="122"/>
    </location>
</feature>
<feature type="sequence conflict" description="In Ref. 1; BAA22270." evidence="4" ref="1">
    <original>T</original>
    <variation>H</variation>
    <location>
        <position position="149"/>
    </location>
</feature>
<feature type="sequence conflict" description="In Ref. 1; BAA22270." evidence="4" ref="1">
    <original>T</original>
    <variation>A</variation>
    <location>
        <position position="198"/>
    </location>
</feature>
<feature type="sequence conflict" description="In Ref. 1; BAA22270." evidence="4" ref="1">
    <original>QGWR</original>
    <variation>HVA</variation>
    <location>
        <begin position="228"/>
        <end position="231"/>
    </location>
</feature>
<feature type="sequence conflict" description="In Ref. 1; BAA22270." evidence="4" ref="1">
    <original>T</original>
    <variation>S</variation>
    <location>
        <position position="277"/>
    </location>
</feature>
<feature type="sequence conflict" description="In Ref. 1; BAA22270." evidence="4" ref="1">
    <original>PA</original>
    <variation>LG</variation>
    <location>
        <begin position="311"/>
        <end position="312"/>
    </location>
</feature>
<protein>
    <recommendedName>
        <fullName evidence="2">Large ribosomal subunit protein uL3</fullName>
    </recommendedName>
    <alternativeName>
        <fullName evidence="4">50S ribosomal protein L3</fullName>
    </alternativeName>
</protein>
<organism>
    <name type="scientific">Halobacterium salinarum (strain ATCC 700922 / JCM 11081 / NRC-1)</name>
    <name type="common">Halobacterium halobium</name>
    <dbReference type="NCBI Taxonomy" id="64091"/>
    <lineage>
        <taxon>Archaea</taxon>
        <taxon>Methanobacteriati</taxon>
        <taxon>Methanobacteriota</taxon>
        <taxon>Stenosarchaea group</taxon>
        <taxon>Halobacteria</taxon>
        <taxon>Halobacteriales</taxon>
        <taxon>Halobacteriaceae</taxon>
        <taxon>Halobacterium</taxon>
        <taxon>Halobacterium salinarum NRC-34001</taxon>
    </lineage>
</organism>
<reference key="1">
    <citation type="journal article" date="1993" name="Biochim. Biophys. Acta">
        <title>Nucleotide sequence of the genes encoding the L3, L4, and L23 equivalent ribosomal proteins from the archaebacterium Halobacterium halobium.</title>
        <authorList>
            <person name="Yuki Y."/>
            <person name="Kanechika R."/>
            <person name="Itoh T."/>
        </authorList>
    </citation>
    <scope>NUCLEOTIDE SEQUENCE [GENOMIC DNA]</scope>
</reference>
<reference key="2">
    <citation type="journal article" date="2000" name="Proc. Natl. Acad. Sci. U.S.A.">
        <title>Genome sequence of Halobacterium species NRC-1.</title>
        <authorList>
            <person name="Ng W.V."/>
            <person name="Kennedy S.P."/>
            <person name="Mahairas G.G."/>
            <person name="Berquist B."/>
            <person name="Pan M."/>
            <person name="Shukla H.D."/>
            <person name="Lasky S.R."/>
            <person name="Baliga N.S."/>
            <person name="Thorsson V."/>
            <person name="Sbrogna J."/>
            <person name="Swartzell S."/>
            <person name="Weir D."/>
            <person name="Hall J."/>
            <person name="Dahl T.A."/>
            <person name="Welti R."/>
            <person name="Goo Y.A."/>
            <person name="Leithauser B."/>
            <person name="Keller K."/>
            <person name="Cruz R."/>
            <person name="Danson M.J."/>
            <person name="Hough D.W."/>
            <person name="Maddocks D.G."/>
            <person name="Jablonski P.E."/>
            <person name="Krebs M.P."/>
            <person name="Angevine C.M."/>
            <person name="Dale H."/>
            <person name="Isenbarger T.A."/>
            <person name="Peck R.F."/>
            <person name="Pohlschroder M."/>
            <person name="Spudich J.L."/>
            <person name="Jung K.-H."/>
            <person name="Alam M."/>
            <person name="Freitas T."/>
            <person name="Hou S."/>
            <person name="Daniels C.J."/>
            <person name="Dennis P.P."/>
            <person name="Omer A.D."/>
            <person name="Ebhardt H."/>
            <person name="Lowe T.M."/>
            <person name="Liang P."/>
            <person name="Riley M."/>
            <person name="Hood L."/>
            <person name="DasSarma S."/>
        </authorList>
    </citation>
    <scope>NUCLEOTIDE SEQUENCE [LARGE SCALE GENOMIC DNA]</scope>
    <source>
        <strain>ATCC 700922 / JCM 11081 / NRC-1</strain>
    </source>
</reference>
<sequence length="335" mass="36569">MPQPNRPRKGSMGFSPRKRAESEVPRFNSWPADDGEVGLQGFAGYKAGMTHVVLVDDKANAPTEGMETTVPVTVVETPPMRAAAVRLYEDTPYGKKPLTEVWADDTHESLDRTLSVPDEGGDTDELIEALDTEEIADIRVITHTVPGDTAGVPKKNPDVMETRVGGGTLADRLEFAADLIEDGGVHAFGDVFRAGEFTDAAGITKGKGTQGPVKRWGVQKRKGKHARQGWRRRIGNLGPWNPSRVRSTVPQQGQTGYHQRTELNKRLIDINDGDEPTPDGGFPNYGEVDGPYTLVKGSVPGPEQRLVRFRPAVRPNESPRLDPEVRYVSTASNQG</sequence>
<dbReference type="EMBL" id="AB006961">
    <property type="protein sequence ID" value="BAA22270.1"/>
    <property type="molecule type" value="Genomic_DNA"/>
</dbReference>
<dbReference type="EMBL" id="AE004437">
    <property type="protein sequence ID" value="AAG19936.1"/>
    <property type="molecule type" value="Genomic_DNA"/>
</dbReference>
<dbReference type="PIR" id="D84321">
    <property type="entry name" value="D84321"/>
</dbReference>
<dbReference type="PIR" id="T43816">
    <property type="entry name" value="T43816"/>
</dbReference>
<dbReference type="RefSeq" id="WP_010903234.1">
    <property type="nucleotide sequence ID" value="NC_002607.1"/>
</dbReference>
<dbReference type="SMR" id="Q9HPD4"/>
<dbReference type="FunCoup" id="Q9HPD4">
    <property type="interactions" value="118"/>
</dbReference>
<dbReference type="STRING" id="64091.VNG_1689G"/>
<dbReference type="PaxDb" id="64091-VNG_1689G"/>
<dbReference type="KEGG" id="hal:VNG_1689G"/>
<dbReference type="PATRIC" id="fig|64091.14.peg.1288"/>
<dbReference type="HOGENOM" id="CLU_033361_2_0_2"/>
<dbReference type="InParanoid" id="Q9HPD4"/>
<dbReference type="OrthoDB" id="6121at2157"/>
<dbReference type="PhylomeDB" id="Q9HPD4"/>
<dbReference type="Proteomes" id="UP000000554">
    <property type="component" value="Chromosome"/>
</dbReference>
<dbReference type="GO" id="GO:0022625">
    <property type="term" value="C:cytosolic large ribosomal subunit"/>
    <property type="evidence" value="ECO:0000318"/>
    <property type="project" value="GO_Central"/>
</dbReference>
<dbReference type="GO" id="GO:0003723">
    <property type="term" value="F:RNA binding"/>
    <property type="evidence" value="ECO:0000318"/>
    <property type="project" value="GO_Central"/>
</dbReference>
<dbReference type="GO" id="GO:0019843">
    <property type="term" value="F:rRNA binding"/>
    <property type="evidence" value="ECO:0007669"/>
    <property type="project" value="UniProtKB-UniRule"/>
</dbReference>
<dbReference type="GO" id="GO:0003735">
    <property type="term" value="F:structural constituent of ribosome"/>
    <property type="evidence" value="ECO:0000318"/>
    <property type="project" value="GO_Central"/>
</dbReference>
<dbReference type="GO" id="GO:0006412">
    <property type="term" value="P:translation"/>
    <property type="evidence" value="ECO:0000318"/>
    <property type="project" value="GO_Central"/>
</dbReference>
<dbReference type="Gene3D" id="3.30.1430.10">
    <property type="match status" value="1"/>
</dbReference>
<dbReference type="Gene3D" id="4.10.960.10">
    <property type="entry name" value="Ribosomal protein L3, domain 3"/>
    <property type="match status" value="1"/>
</dbReference>
<dbReference type="Gene3D" id="2.40.30.10">
    <property type="entry name" value="Translation factors"/>
    <property type="match status" value="1"/>
</dbReference>
<dbReference type="HAMAP" id="MF_01325_A">
    <property type="entry name" value="Ribosomal_uL3_A"/>
    <property type="match status" value="1"/>
</dbReference>
<dbReference type="InterPro" id="IPR045077">
    <property type="entry name" value="L3_arc_euk"/>
</dbReference>
<dbReference type="InterPro" id="IPR044892">
    <property type="entry name" value="Ribosomal_L3_dom_3_arc_sf"/>
</dbReference>
<dbReference type="InterPro" id="IPR000597">
    <property type="entry name" value="Ribosomal_uL3"/>
</dbReference>
<dbReference type="InterPro" id="IPR019928">
    <property type="entry name" value="Ribosomal_uL3_arc"/>
</dbReference>
<dbReference type="InterPro" id="IPR019926">
    <property type="entry name" value="Ribosomal_uL3_CS"/>
</dbReference>
<dbReference type="InterPro" id="IPR009000">
    <property type="entry name" value="Transl_B-barrel_sf"/>
</dbReference>
<dbReference type="NCBIfam" id="TIGR03626">
    <property type="entry name" value="L3_arch"/>
    <property type="match status" value="1"/>
</dbReference>
<dbReference type="NCBIfam" id="NF003261">
    <property type="entry name" value="PRK04231.1"/>
    <property type="match status" value="1"/>
</dbReference>
<dbReference type="PANTHER" id="PTHR11363">
    <property type="entry name" value="60S RIBOSOMAL PROTEIN L3-RELATED"/>
    <property type="match status" value="1"/>
</dbReference>
<dbReference type="PANTHER" id="PTHR11363:SF5">
    <property type="entry name" value="LARGE RIBOSOMAL SUBUNIT PROTEIN UL3"/>
    <property type="match status" value="1"/>
</dbReference>
<dbReference type="Pfam" id="PF00297">
    <property type="entry name" value="Ribosomal_L3"/>
    <property type="match status" value="1"/>
</dbReference>
<dbReference type="SUPFAM" id="SSF50447">
    <property type="entry name" value="Translation proteins"/>
    <property type="match status" value="1"/>
</dbReference>
<dbReference type="PROSITE" id="PS00474">
    <property type="entry name" value="RIBOSOMAL_L3"/>
    <property type="match status" value="1"/>
</dbReference>
<gene>
    <name evidence="2" type="primary">rpl3</name>
    <name type="ordered locus">VNG_1689G</name>
</gene>
<accession>Q9HPD4</accession>
<accession>Q06844</accession>